<feature type="chain" id="PRO_0000453758" description="Trans-enoyl reductase poxH">
    <location>
        <begin position="1"/>
        <end position="385"/>
    </location>
</feature>
<feature type="binding site" evidence="1">
    <location>
        <begin position="64"/>
        <end position="67"/>
    </location>
    <ligand>
        <name>NADP(+)</name>
        <dbReference type="ChEBI" id="CHEBI:58349"/>
    </ligand>
</feature>
<feature type="binding site" evidence="2">
    <location>
        <begin position="156"/>
        <end position="163"/>
    </location>
    <ligand>
        <name>substrate</name>
    </ligand>
</feature>
<feature type="binding site" evidence="1">
    <location>
        <begin position="199"/>
        <end position="202"/>
    </location>
    <ligand>
        <name>NADP(+)</name>
        <dbReference type="ChEBI" id="CHEBI:58349"/>
    </ligand>
</feature>
<feature type="binding site" evidence="1">
    <location>
        <begin position="223"/>
        <end position="226"/>
    </location>
    <ligand>
        <name>NADP(+)</name>
        <dbReference type="ChEBI" id="CHEBI:58349"/>
    </ligand>
</feature>
<feature type="binding site" evidence="1">
    <location>
        <position position="241"/>
    </location>
    <ligand>
        <name>NADP(+)</name>
        <dbReference type="ChEBI" id="CHEBI:58349"/>
    </ligand>
</feature>
<feature type="binding site" evidence="1">
    <location>
        <begin position="289"/>
        <end position="290"/>
    </location>
    <ligand>
        <name>NADP(+)</name>
        <dbReference type="ChEBI" id="CHEBI:58349"/>
    </ligand>
</feature>
<feature type="binding site" evidence="2">
    <location>
        <begin position="309"/>
        <end position="313"/>
    </location>
    <ligand>
        <name>substrate</name>
    </ligand>
</feature>
<feature type="binding site" evidence="1">
    <location>
        <begin position="372"/>
        <end position="373"/>
    </location>
    <ligand>
        <name>NADP(+)</name>
        <dbReference type="ChEBI" id="CHEBI:58349"/>
    </ligand>
</feature>
<organism>
    <name type="scientific">Penicillium oxalicum (strain 114-2 / CGMCC 5302)</name>
    <name type="common">Penicillium decumbens</name>
    <dbReference type="NCBI Taxonomy" id="933388"/>
    <lineage>
        <taxon>Eukaryota</taxon>
        <taxon>Fungi</taxon>
        <taxon>Dikarya</taxon>
        <taxon>Ascomycota</taxon>
        <taxon>Pezizomycotina</taxon>
        <taxon>Eurotiomycetes</taxon>
        <taxon>Eurotiomycetidae</taxon>
        <taxon>Eurotiales</taxon>
        <taxon>Aspergillaceae</taxon>
        <taxon>Penicillium</taxon>
    </lineage>
</organism>
<comment type="function">
    <text evidence="3 7">Trans-enoyl reductase; part of the gene cluster that mediates the biosynthesis of oxaleimides, cytotoxic compounds containing an unusual disubstituted succinimide moiety (PubMed:28365998). The first step of the pathway is provided by the HR-PKS poxF that serves in a new mode of collaborative biosynthesis with the PKS-NRPS poxE, by providing the olefin containing amino acid substrate via the synthesis of an ACP-bound dec-4-enoate (PubMed:28365998). The cytochrome P450 monooxygenase poxM-catalyzed oxidation at the alpha-position creates the enzyme-bound 2-hydroxydec-4-enoyl-ACP thioester, which may be prone to spontaneous hydrolysis to yield 2-hydroxydec-4-enoic acid due to increased electrophilicity of the carbonyl (PubMed:28365998). 2-hydroxydec-4-enoic acid can then be further oxidized by poxM to yield the alpha-ketoacid 2-oxodec-4-enoicacid, which is reductively aminated by the aminotransferase poxL to yield (S,E)-2-aminodec-4-enoic acid (PubMed:28365998). The Hybrid PKS-NRPS synthetase poxE then performs condensation between the octaketide product of its PKS modules and the amino group of (S,E)-2-aminodec-4-enoic acid which is activated and incorporated by the adenylation domain (PubMed:28365998). The resulting aminoacyl product can be cyclized by the Diels-Alderase PoxQ and reductively released by the reductive (R) domain of poxE to yield an aldehyde intermediate (Probable) (PubMed:28365998). The released aldehyde is then substrate for a Knoevenagel condensation by the hydrolyase poxO followed by an oxidation at the 5-position of the pyrrolidone ring (PubMed:28365998). The presence of the olefin from the amino acid building block allows for migration of the substituted allyl group to occur (PubMed:28365998). This allylic transposition reaction takes place in a conjugate addition, semipinacol-like fashion to yield a succinimide intermediate (PubMed:28365998). Iterative two-electron oxidations of the C7 methyl of the succinimide intermediate to the carboxylic acid can be catalyzed by one of two remaining cytochrome P450 monooxygenasess poxC or poxD to yield oxaleimide A (PubMed:28365998). Subsequent oxidation yields the maleimide scaffold oxaleimide I (PubMed:28365998). Both oxaleimide A and oxaleimide I can undergo oxidative modifications in the decalin ring to yield the series of products oxaleimides B to H (PubMed:28365998).</text>
</comment>
<comment type="pathway">
    <text evidence="6">Secondary metabolite biosynthesis.</text>
</comment>
<comment type="subunit">
    <text evidence="1">Monomer.</text>
</comment>
<comment type="induction">
    <text evidence="3">Expression is positively regulated by the oxaleimides biosynthesis cluster-specific transcription factor poxB.</text>
</comment>
<comment type="similarity">
    <text evidence="5">Belongs to the zinc-containing alcohol dehydrogenase family.</text>
</comment>
<dbReference type="EC" id="1.-.-.-" evidence="6"/>
<dbReference type="EMBL" id="KB644411">
    <property type="protein sequence ID" value="EPS29071.1"/>
    <property type="molecule type" value="Genomic_DNA"/>
</dbReference>
<dbReference type="SMR" id="S7ZK59"/>
<dbReference type="STRING" id="933388.S7ZK59"/>
<dbReference type="eggNOG" id="KOG1198">
    <property type="taxonomic scope" value="Eukaryota"/>
</dbReference>
<dbReference type="HOGENOM" id="CLU_026673_3_3_1"/>
<dbReference type="OrthoDB" id="3509362at2759"/>
<dbReference type="PhylomeDB" id="S7ZK59"/>
<dbReference type="Proteomes" id="UP000019376">
    <property type="component" value="Unassembled WGS sequence"/>
</dbReference>
<dbReference type="GO" id="GO:0005739">
    <property type="term" value="C:mitochondrion"/>
    <property type="evidence" value="ECO:0007669"/>
    <property type="project" value="TreeGrafter"/>
</dbReference>
<dbReference type="GO" id="GO:0000166">
    <property type="term" value="F:nucleotide binding"/>
    <property type="evidence" value="ECO:0007669"/>
    <property type="project" value="UniProtKB-KW"/>
</dbReference>
<dbReference type="GO" id="GO:0016491">
    <property type="term" value="F:oxidoreductase activity"/>
    <property type="evidence" value="ECO:0007669"/>
    <property type="project" value="UniProtKB-KW"/>
</dbReference>
<dbReference type="CDD" id="cd08267">
    <property type="entry name" value="MDR1"/>
    <property type="match status" value="1"/>
</dbReference>
<dbReference type="Gene3D" id="3.90.180.10">
    <property type="entry name" value="Medium-chain alcohol dehydrogenases, catalytic domain"/>
    <property type="match status" value="1"/>
</dbReference>
<dbReference type="Gene3D" id="3.40.50.720">
    <property type="entry name" value="NAD(P)-binding Rossmann-like Domain"/>
    <property type="match status" value="1"/>
</dbReference>
<dbReference type="InterPro" id="IPR011032">
    <property type="entry name" value="GroES-like_sf"/>
</dbReference>
<dbReference type="InterPro" id="IPR036291">
    <property type="entry name" value="NAD(P)-bd_dom_sf"/>
</dbReference>
<dbReference type="InterPro" id="IPR020843">
    <property type="entry name" value="PKS_ER"/>
</dbReference>
<dbReference type="InterPro" id="IPR050700">
    <property type="entry name" value="YIM1/Zinc_Alcohol_DH_Fams"/>
</dbReference>
<dbReference type="PANTHER" id="PTHR11695">
    <property type="entry name" value="ALCOHOL DEHYDROGENASE RELATED"/>
    <property type="match status" value="1"/>
</dbReference>
<dbReference type="PANTHER" id="PTHR11695:SF294">
    <property type="entry name" value="RETICULON-4-INTERACTING PROTEIN 1, MITOCHONDRIAL"/>
    <property type="match status" value="1"/>
</dbReference>
<dbReference type="Pfam" id="PF13602">
    <property type="entry name" value="ADH_zinc_N_2"/>
    <property type="match status" value="1"/>
</dbReference>
<dbReference type="SMART" id="SM00829">
    <property type="entry name" value="PKS_ER"/>
    <property type="match status" value="1"/>
</dbReference>
<dbReference type="SUPFAM" id="SSF50129">
    <property type="entry name" value="GroES-like"/>
    <property type="match status" value="1"/>
</dbReference>
<dbReference type="SUPFAM" id="SSF51735">
    <property type="entry name" value="NAD(P)-binding Rossmann-fold domains"/>
    <property type="match status" value="1"/>
</dbReference>
<reference key="1">
    <citation type="journal article" date="2013" name="PLoS ONE">
        <title>Genomic and secretomic analyses reveal unique features of the lignocellulolytic enzyme system of Penicillium decumbens.</title>
        <authorList>
            <person name="Liu G."/>
            <person name="Zhang L."/>
            <person name="Wei X."/>
            <person name="Zou G."/>
            <person name="Qin Y."/>
            <person name="Ma L."/>
            <person name="Li J."/>
            <person name="Zheng H."/>
            <person name="Wang S."/>
            <person name="Wang C."/>
            <person name="Xun L."/>
            <person name="Zhao G.-P."/>
            <person name="Zhou Z."/>
            <person name="Qu Y."/>
        </authorList>
    </citation>
    <scope>NUCLEOTIDE SEQUENCE [LARGE SCALE GENOMIC DNA]</scope>
    <source>
        <strain>114-2 / CGMCC 5302</strain>
    </source>
</reference>
<reference key="2">
    <citation type="journal article" date="2017" name="J. Am. Chem. Soc.">
        <title>Collaborative Biosynthesis of Maleimide- and Succinimide-Containing Natural Products by Fungal Polyketide Megasynthases.</title>
        <authorList>
            <person name="Sato M."/>
            <person name="Dander J.E."/>
            <person name="Sato C."/>
            <person name="Hung Y.S."/>
            <person name="Gao S.S."/>
            <person name="Tang M.C."/>
            <person name="Hang L."/>
            <person name="Winter J.M."/>
            <person name="Garg N.K."/>
            <person name="Watanabe K."/>
            <person name="Tang Y."/>
        </authorList>
    </citation>
    <scope>FUNCTION</scope>
    <scope>INDUCTION</scope>
    <scope>PATHWAY</scope>
</reference>
<reference key="3">
    <citation type="journal article" date="2020" name="Chem. Commun. (Camb.)">
        <title>Evidence for enzyme catalysed intramolecular [4+2] Diels-Alder cyclization during the biosynthesis of pyrichalasin H.</title>
        <authorList>
            <person name="Hantke V."/>
            <person name="Skellam E.J."/>
            <person name="Cox R.J."/>
        </authorList>
    </citation>
    <scope>FUNCTION</scope>
</reference>
<gene>
    <name evidence="4" type="primary">poxH</name>
    <name type="ORF">PDE_04020</name>
</gene>
<accession>S7ZK59</accession>
<keyword id="KW-0521">NADP</keyword>
<keyword id="KW-0547">Nucleotide-binding</keyword>
<keyword id="KW-0560">Oxidoreductase</keyword>
<keyword id="KW-1185">Reference proteome</keyword>
<name>POXH_PENO1</name>
<sequence>MSTTTTMRAWTYMQSGLPSQTIVLDDEAPSPSAAELGPDELLIAVNYVAMNSGFTTLMRSLPPQPYSLPHIYNRQKRLGVPEFEFSGRILAVGSAIPSTRPDLQPSTLVLGCCAAKRVFIEGKGALAERVIAPAAQLIPLRPLSTVTTQDDESPGPDPAAPPISLLEASGLSACGCTAVQVLDLTKLVAGDKLFVNGGSTSVGMLIIQVARQVLGQTGTIIASGTDATLIRSVGADDVIDYTAQRPLHEFLRTHHAGRPFDAIIDCVGVAELYTHCEPYLAPGKLFINLGAMTAKPTFWGLLSFVWNQHMAPLWPVVLGGVPRSYQFYSARPNRETLGRVMRLVERGELRMVVDSVWEMRDAKMAYKRMESKRAKGKIIVRVQEE</sequence>
<evidence type="ECO:0000250" key="1">
    <source>
        <dbReference type="UniProtKB" id="Q9Y7D0"/>
    </source>
</evidence>
<evidence type="ECO:0000255" key="2"/>
<evidence type="ECO:0000269" key="3">
    <source>
    </source>
</evidence>
<evidence type="ECO:0000303" key="4">
    <source>
    </source>
</evidence>
<evidence type="ECO:0000305" key="5"/>
<evidence type="ECO:0000305" key="6">
    <source>
    </source>
</evidence>
<evidence type="ECO:0000305" key="7">
    <source>
    </source>
</evidence>
<proteinExistence type="evidence at transcript level"/>
<protein>
    <recommendedName>
        <fullName evidence="4">Trans-enoyl reductase poxH</fullName>
        <ecNumber evidence="6">1.-.-.-</ecNumber>
    </recommendedName>
    <alternativeName>
        <fullName evidence="4">Oxaleimides biosynthesis cluster protein H</fullName>
    </alternativeName>
</protein>